<evidence type="ECO:0000250" key="1">
    <source>
        <dbReference type="UniProtKB" id="Q5GI04"/>
    </source>
</evidence>
<evidence type="ECO:0000255" key="2"/>
<evidence type="ECO:0000269" key="3">
    <source>
    </source>
</evidence>
<evidence type="ECO:0000303" key="4">
    <source>
    </source>
</evidence>
<evidence type="ECO:0000312" key="5">
    <source>
        <dbReference type="EMBL" id="BAC99370.1"/>
    </source>
</evidence>
<evidence type="ECO:0000312" key="6">
    <source>
        <dbReference type="EMBL" id="BAC99432.1"/>
    </source>
</evidence>
<evidence type="ECO:0000312" key="7">
    <source>
        <dbReference type="EMBL" id="BAF23658.1"/>
    </source>
</evidence>
<evidence type="ECO:0000312" key="8">
    <source>
        <dbReference type="EMBL" id="BAT05322.1"/>
    </source>
</evidence>
<evidence type="ECO:0000312" key="9">
    <source>
        <dbReference type="EMBL" id="EEE68638.1"/>
    </source>
</evidence>
<sequence>MGQALGLVQVDQSTVAIKESFGKFDEVLEPGCHFLPWCIGKQIAGYLSLRVQQLDVRCETKTKDNVFVNVVASVQYRALAEKASDAFYRLSNTREQIQSYVFDVIRASVPKMNLDDAFEQKNEIAKAVEDELEKAMSMYGYEIVQTLIVDIEPDEHVKRAMNEINAAARLRVAANEKAEAEKILQIKRAEGDAESKYLAGLGIARQRQAIVDGLRDSVLAFSENVPGTSAKDVMDMVLVTQYFDTMKEIGASSKSSSVFIPHGPGAVKDIAAQIRDGQLQAKLI</sequence>
<accession>Q6ZIV7</accession>
<feature type="initiator methionine" description="Removed" evidence="2">
    <location>
        <position position="1"/>
    </location>
</feature>
<feature type="chain" id="PRO_0000439386" description="Hypersensitive-induced response protein 1">
    <location>
        <begin position="2"/>
        <end position="284"/>
    </location>
</feature>
<feature type="lipid moiety-binding region" description="N-myristoyl glycine" evidence="2">
    <location>
        <position position="2"/>
    </location>
</feature>
<keyword id="KW-1003">Cell membrane</keyword>
<keyword id="KW-0449">Lipoprotein</keyword>
<keyword id="KW-0472">Membrane</keyword>
<keyword id="KW-0519">Myristate</keyword>
<keyword id="KW-1185">Reference proteome</keyword>
<gene>
    <name evidence="4" type="primary">HIR1</name>
    <name evidence="7" type="ordered locus">Os08g0398400</name>
    <name type="ordered locus">LOC_Os08g30790</name>
    <name evidence="5" type="ORF">OJ1051_A08.5</name>
    <name evidence="6" type="ORF">OJ1198_B10.17</name>
    <name evidence="9" type="ORF">OsJ_27208</name>
    <name evidence="8" type="ORF">OSNPB_080398400</name>
</gene>
<organism evidence="6">
    <name type="scientific">Oryza sativa subsp. japonica</name>
    <name type="common">Rice</name>
    <dbReference type="NCBI Taxonomy" id="39947"/>
    <lineage>
        <taxon>Eukaryota</taxon>
        <taxon>Viridiplantae</taxon>
        <taxon>Streptophyta</taxon>
        <taxon>Embryophyta</taxon>
        <taxon>Tracheophyta</taxon>
        <taxon>Spermatophyta</taxon>
        <taxon>Magnoliopsida</taxon>
        <taxon>Liliopsida</taxon>
        <taxon>Poales</taxon>
        <taxon>Poaceae</taxon>
        <taxon>BOP clade</taxon>
        <taxon>Oryzoideae</taxon>
        <taxon>Oryzeae</taxon>
        <taxon>Oryzinae</taxon>
        <taxon>Oryza</taxon>
        <taxon>Oryza sativa</taxon>
    </lineage>
</organism>
<protein>
    <recommendedName>
        <fullName evidence="4">Hypersensitive-induced response protein 1</fullName>
        <shortName evidence="4">OsHIR1</shortName>
    </recommendedName>
</protein>
<dbReference type="EMBL" id="AP003904">
    <property type="protein sequence ID" value="BAC99370.1"/>
    <property type="molecule type" value="Genomic_DNA"/>
</dbReference>
<dbReference type="EMBL" id="AP003947">
    <property type="protein sequence ID" value="BAC99432.1"/>
    <property type="molecule type" value="Genomic_DNA"/>
</dbReference>
<dbReference type="EMBL" id="AP008214">
    <property type="protein sequence ID" value="BAF23658.1"/>
    <property type="molecule type" value="Genomic_DNA"/>
</dbReference>
<dbReference type="EMBL" id="AP014964">
    <property type="protein sequence ID" value="BAT05322.1"/>
    <property type="molecule type" value="Genomic_DNA"/>
</dbReference>
<dbReference type="EMBL" id="CM000145">
    <property type="protein sequence ID" value="EEE68638.1"/>
    <property type="molecule type" value="Genomic_DNA"/>
</dbReference>
<dbReference type="EMBL" id="AK065554">
    <property type="protein sequence ID" value="BAG89561.1"/>
    <property type="molecule type" value="mRNA"/>
</dbReference>
<dbReference type="RefSeq" id="XP_015649944.1">
    <property type="nucleotide sequence ID" value="XM_015794458.1"/>
</dbReference>
<dbReference type="RefSeq" id="XP_015649945.1">
    <property type="nucleotide sequence ID" value="XM_015794459.1"/>
</dbReference>
<dbReference type="SMR" id="Q6ZIV7"/>
<dbReference type="FunCoup" id="Q6ZIV7">
    <property type="interactions" value="6"/>
</dbReference>
<dbReference type="STRING" id="39947.Q6ZIV7"/>
<dbReference type="PaxDb" id="39947-Q6ZIV7"/>
<dbReference type="EnsemblPlants" id="Os08t0398400-01">
    <property type="protein sequence ID" value="Os08t0398400-01"/>
    <property type="gene ID" value="Os08g0398400"/>
</dbReference>
<dbReference type="Gramene" id="Os08t0398400-01">
    <property type="protein sequence ID" value="Os08t0398400-01"/>
    <property type="gene ID" value="Os08g0398400"/>
</dbReference>
<dbReference type="KEGG" id="dosa:Os08g0398400"/>
<dbReference type="eggNOG" id="KOG2620">
    <property type="taxonomic scope" value="Eukaryota"/>
</dbReference>
<dbReference type="HOGENOM" id="CLU_024949_5_1_1"/>
<dbReference type="InParanoid" id="Q6ZIV7"/>
<dbReference type="OMA" id="RVYTFDM"/>
<dbReference type="OrthoDB" id="434619at2759"/>
<dbReference type="Proteomes" id="UP000000763">
    <property type="component" value="Chromosome 8"/>
</dbReference>
<dbReference type="Proteomes" id="UP000007752">
    <property type="component" value="Chromosome 8"/>
</dbReference>
<dbReference type="Proteomes" id="UP000059680">
    <property type="component" value="Chromosome 8"/>
</dbReference>
<dbReference type="GO" id="GO:0005886">
    <property type="term" value="C:plasma membrane"/>
    <property type="evidence" value="ECO:0007669"/>
    <property type="project" value="UniProtKB-SubCell"/>
</dbReference>
<dbReference type="CDD" id="cd03407">
    <property type="entry name" value="SPFH_like_u4"/>
    <property type="match status" value="1"/>
</dbReference>
<dbReference type="FunFam" id="3.30.479.30:FF:000013">
    <property type="entry name" value="Hypersensitive-induced response protein 1"/>
    <property type="match status" value="1"/>
</dbReference>
<dbReference type="Gene3D" id="3.30.479.30">
    <property type="entry name" value="Band 7 domain"/>
    <property type="match status" value="1"/>
</dbReference>
<dbReference type="InterPro" id="IPR050710">
    <property type="entry name" value="Band7/mec-2_domain"/>
</dbReference>
<dbReference type="InterPro" id="IPR001107">
    <property type="entry name" value="Band_7"/>
</dbReference>
<dbReference type="InterPro" id="IPR036013">
    <property type="entry name" value="Band_7/SPFH_dom_sf"/>
</dbReference>
<dbReference type="PANTHER" id="PTHR43327:SF31">
    <property type="entry name" value="HYPERSENSITIVE-INDUCED RESPONSE PROTEIN 2"/>
    <property type="match status" value="1"/>
</dbReference>
<dbReference type="PANTHER" id="PTHR43327">
    <property type="entry name" value="STOMATIN-LIKE PROTEIN 2, MITOCHONDRIAL"/>
    <property type="match status" value="1"/>
</dbReference>
<dbReference type="Pfam" id="PF01145">
    <property type="entry name" value="Band_7"/>
    <property type="match status" value="1"/>
</dbReference>
<dbReference type="SMART" id="SM00244">
    <property type="entry name" value="PHB"/>
    <property type="match status" value="1"/>
</dbReference>
<dbReference type="SUPFAM" id="SSF117892">
    <property type="entry name" value="Band 7/SPFH domain"/>
    <property type="match status" value="1"/>
</dbReference>
<proteinExistence type="evidence at protein level"/>
<name>HIR1_ORYSJ</name>
<reference key="1">
    <citation type="journal article" date="2005" name="Nature">
        <title>The map-based sequence of the rice genome.</title>
        <authorList>
            <consortium name="International rice genome sequencing project (IRGSP)"/>
        </authorList>
    </citation>
    <scope>NUCLEOTIDE SEQUENCE [LARGE SCALE GENOMIC DNA]</scope>
    <source>
        <strain>cv. Nipponbare</strain>
    </source>
</reference>
<reference key="2">
    <citation type="journal article" date="2008" name="Nucleic Acids Res.">
        <title>The rice annotation project database (RAP-DB): 2008 update.</title>
        <authorList>
            <consortium name="The rice annotation project (RAP)"/>
        </authorList>
    </citation>
    <scope>GENOME REANNOTATION</scope>
    <source>
        <strain>cv. Nipponbare</strain>
    </source>
</reference>
<reference key="3">
    <citation type="journal article" date="2013" name="Rice">
        <title>Improvement of the Oryza sativa Nipponbare reference genome using next generation sequence and optical map data.</title>
        <authorList>
            <person name="Kawahara Y."/>
            <person name="de la Bastide M."/>
            <person name="Hamilton J.P."/>
            <person name="Kanamori H."/>
            <person name="McCombie W.R."/>
            <person name="Ouyang S."/>
            <person name="Schwartz D.C."/>
            <person name="Tanaka T."/>
            <person name="Wu J."/>
            <person name="Zhou S."/>
            <person name="Childs K.L."/>
            <person name="Davidson R.M."/>
            <person name="Lin H."/>
            <person name="Quesada-Ocampo L."/>
            <person name="Vaillancourt B."/>
            <person name="Sakai H."/>
            <person name="Lee S.S."/>
            <person name="Kim J."/>
            <person name="Numa H."/>
            <person name="Itoh T."/>
            <person name="Buell C.R."/>
            <person name="Matsumoto T."/>
        </authorList>
    </citation>
    <scope>GENOME REANNOTATION</scope>
    <source>
        <strain>cv. Nipponbare</strain>
    </source>
</reference>
<reference key="4">
    <citation type="journal article" date="2005" name="PLoS Biol.">
        <title>The genomes of Oryza sativa: a history of duplications.</title>
        <authorList>
            <person name="Yu J."/>
            <person name="Wang J."/>
            <person name="Lin W."/>
            <person name="Li S."/>
            <person name="Li H."/>
            <person name="Zhou J."/>
            <person name="Ni P."/>
            <person name="Dong W."/>
            <person name="Hu S."/>
            <person name="Zeng C."/>
            <person name="Zhang J."/>
            <person name="Zhang Y."/>
            <person name="Li R."/>
            <person name="Xu Z."/>
            <person name="Li S."/>
            <person name="Li X."/>
            <person name="Zheng H."/>
            <person name="Cong L."/>
            <person name="Lin L."/>
            <person name="Yin J."/>
            <person name="Geng J."/>
            <person name="Li G."/>
            <person name="Shi J."/>
            <person name="Liu J."/>
            <person name="Lv H."/>
            <person name="Li J."/>
            <person name="Wang J."/>
            <person name="Deng Y."/>
            <person name="Ran L."/>
            <person name="Shi X."/>
            <person name="Wang X."/>
            <person name="Wu Q."/>
            <person name="Li C."/>
            <person name="Ren X."/>
            <person name="Wang J."/>
            <person name="Wang X."/>
            <person name="Li D."/>
            <person name="Liu D."/>
            <person name="Zhang X."/>
            <person name="Ji Z."/>
            <person name="Zhao W."/>
            <person name="Sun Y."/>
            <person name="Zhang Z."/>
            <person name="Bao J."/>
            <person name="Han Y."/>
            <person name="Dong L."/>
            <person name="Ji J."/>
            <person name="Chen P."/>
            <person name="Wu S."/>
            <person name="Liu J."/>
            <person name="Xiao Y."/>
            <person name="Bu D."/>
            <person name="Tan J."/>
            <person name="Yang L."/>
            <person name="Ye C."/>
            <person name="Zhang J."/>
            <person name="Xu J."/>
            <person name="Zhou Y."/>
            <person name="Yu Y."/>
            <person name="Zhang B."/>
            <person name="Zhuang S."/>
            <person name="Wei H."/>
            <person name="Liu B."/>
            <person name="Lei M."/>
            <person name="Yu H."/>
            <person name="Li Y."/>
            <person name="Xu H."/>
            <person name="Wei S."/>
            <person name="He X."/>
            <person name="Fang L."/>
            <person name="Zhang Z."/>
            <person name="Zhang Y."/>
            <person name="Huang X."/>
            <person name="Su Z."/>
            <person name="Tong W."/>
            <person name="Li J."/>
            <person name="Tong Z."/>
            <person name="Li S."/>
            <person name="Ye J."/>
            <person name="Wang L."/>
            <person name="Fang L."/>
            <person name="Lei T."/>
            <person name="Chen C.-S."/>
            <person name="Chen H.-C."/>
            <person name="Xu Z."/>
            <person name="Li H."/>
            <person name="Huang H."/>
            <person name="Zhang F."/>
            <person name="Xu H."/>
            <person name="Li N."/>
            <person name="Zhao C."/>
            <person name="Li S."/>
            <person name="Dong L."/>
            <person name="Huang Y."/>
            <person name="Li L."/>
            <person name="Xi Y."/>
            <person name="Qi Q."/>
            <person name="Li W."/>
            <person name="Zhang B."/>
            <person name="Hu W."/>
            <person name="Zhang Y."/>
            <person name="Tian X."/>
            <person name="Jiao Y."/>
            <person name="Liang X."/>
            <person name="Jin J."/>
            <person name="Gao L."/>
            <person name="Zheng W."/>
            <person name="Hao B."/>
            <person name="Liu S.-M."/>
            <person name="Wang W."/>
            <person name="Yuan L."/>
            <person name="Cao M."/>
            <person name="McDermott J."/>
            <person name="Samudrala R."/>
            <person name="Wang J."/>
            <person name="Wong G.K.-S."/>
            <person name="Yang H."/>
        </authorList>
    </citation>
    <scope>NUCLEOTIDE SEQUENCE [LARGE SCALE GENOMIC DNA]</scope>
    <source>
        <strain>cv. Nipponbare</strain>
    </source>
</reference>
<reference key="5">
    <citation type="journal article" date="2003" name="Science">
        <title>Collection, mapping, and annotation of over 28,000 cDNA clones from japonica rice.</title>
        <authorList>
            <consortium name="The rice full-length cDNA consortium"/>
        </authorList>
    </citation>
    <scope>NUCLEOTIDE SEQUENCE [LARGE SCALE MRNA]</scope>
    <source>
        <strain>cv. Nipponbare</strain>
    </source>
</reference>
<reference key="6">
    <citation type="journal article" date="2009" name="Plant Cell Environ.">
        <title>A novel simple extracellular leucine-rich repeat (eLRR) domain protein from rice (OsLRR1) enters the endosomal pathway and interacts with the hypersensitive-induced reaction protein 1 (OsHIR1).</title>
        <authorList>
            <person name="Zhou L."/>
            <person name="Cheung M.Y."/>
            <person name="Zhang Q."/>
            <person name="Lei C.L."/>
            <person name="Zhang S.H."/>
            <person name="Sun S.S."/>
            <person name="Lam H.M."/>
        </authorList>
    </citation>
    <scope>INTERACTION WITH LRR1</scope>
    <scope>SUBCELLULAR LOCATION</scope>
</reference>
<comment type="function">
    <text evidence="1">Positive regulator of hypersensitive response (HR)-like cell death. May be involved in potassium ion channel regulation.</text>
</comment>
<comment type="subunit">
    <text evidence="3">Interacts with LRR1.</text>
</comment>
<comment type="subcellular location">
    <subcellularLocation>
        <location evidence="3">Cell membrane</location>
        <topology evidence="2">Lipid-anchor</topology>
    </subcellularLocation>
</comment>